<feature type="chain" id="PRO_0000351253" description="Fido domain-containing protein DDB_G0283145">
    <location>
        <begin position="1"/>
        <end position="143"/>
    </location>
</feature>
<feature type="transmembrane region" description="Helical" evidence="1">
    <location>
        <begin position="49"/>
        <end position="69"/>
    </location>
</feature>
<feature type="domain" description="Fido" evidence="2">
    <location>
        <begin position="1"/>
        <end position="128"/>
    </location>
</feature>
<dbReference type="EMBL" id="AAFI02000050">
    <property type="protein sequence ID" value="EAL65882.1"/>
    <property type="status" value="ALT_SEQ"/>
    <property type="molecule type" value="Genomic_DNA"/>
</dbReference>
<dbReference type="EMBL" id="AAFI02000050">
    <property type="protein sequence ID" value="EAL65902.1"/>
    <property type="molecule type" value="Genomic_DNA"/>
</dbReference>
<dbReference type="RefSeq" id="XP_639239.1">
    <property type="nucleotide sequence ID" value="XM_634147.1"/>
</dbReference>
<dbReference type="RefSeq" id="XP_639240.1">
    <property type="nucleotide sequence ID" value="XM_634148.1"/>
</dbReference>
<dbReference type="SMR" id="Q54RJ6"/>
<dbReference type="FunCoup" id="Q54RJ6">
    <property type="interactions" value="1"/>
</dbReference>
<dbReference type="PaxDb" id="44689-DDB0218445"/>
<dbReference type="EnsemblProtists" id="EAL65882">
    <property type="protein sequence ID" value="EAL65882"/>
    <property type="gene ID" value="DDB_G0283105"/>
</dbReference>
<dbReference type="EnsemblProtists" id="EAL65902">
    <property type="protein sequence ID" value="EAL65902"/>
    <property type="gene ID" value="DDB_G0283145"/>
</dbReference>
<dbReference type="GeneID" id="8623925"/>
<dbReference type="KEGG" id="ddi:DDB_G0283105"/>
<dbReference type="KEGG" id="ddi:DDB_G0283145"/>
<dbReference type="dictyBase" id="DDB_G0283145"/>
<dbReference type="VEuPathDB" id="AmoebaDB:DDB_G0283145"/>
<dbReference type="eggNOG" id="KOG3824">
    <property type="taxonomic scope" value="Eukaryota"/>
</dbReference>
<dbReference type="HOGENOM" id="CLU_150966_0_0_1"/>
<dbReference type="InParanoid" id="Q54RJ6"/>
<dbReference type="OMA" id="NWHRTLM"/>
<dbReference type="PhylomeDB" id="Q54RJ6"/>
<dbReference type="PRO" id="PR:Q54RJ6"/>
<dbReference type="Proteomes" id="UP000002195">
    <property type="component" value="Chromosome 4"/>
</dbReference>
<dbReference type="GO" id="GO:0016020">
    <property type="term" value="C:membrane"/>
    <property type="evidence" value="ECO:0007669"/>
    <property type="project" value="UniProtKB-SubCell"/>
</dbReference>
<dbReference type="Gene3D" id="1.10.3290.10">
    <property type="entry name" value="Fido-like domain"/>
    <property type="match status" value="1"/>
</dbReference>
<dbReference type="InterPro" id="IPR003812">
    <property type="entry name" value="Fido"/>
</dbReference>
<dbReference type="InterPro" id="IPR036597">
    <property type="entry name" value="Fido-like_dom_sf"/>
</dbReference>
<dbReference type="InterPro" id="IPR040198">
    <property type="entry name" value="Fido_containing"/>
</dbReference>
<dbReference type="PANTHER" id="PTHR13504:SF38">
    <property type="entry name" value="FIDO DOMAIN-CONTAINING PROTEIN"/>
    <property type="match status" value="1"/>
</dbReference>
<dbReference type="PANTHER" id="PTHR13504">
    <property type="entry name" value="FIDO DOMAIN-CONTAINING PROTEIN DDB_G0283145"/>
    <property type="match status" value="1"/>
</dbReference>
<dbReference type="Pfam" id="PF02661">
    <property type="entry name" value="Fic"/>
    <property type="match status" value="1"/>
</dbReference>
<dbReference type="SUPFAM" id="SSF140931">
    <property type="entry name" value="Fic-like"/>
    <property type="match status" value="1"/>
</dbReference>
<dbReference type="PROSITE" id="PS51459">
    <property type="entry name" value="FIDO"/>
    <property type="match status" value="1"/>
</dbReference>
<gene>
    <name type="ORF">DDB_G0283145</name>
</gene>
<evidence type="ECO:0000255" key="1"/>
<evidence type="ECO:0000255" key="2">
    <source>
        <dbReference type="PROSITE-ProRule" id="PRU00791"/>
    </source>
</evidence>
<evidence type="ECO:0000305" key="3"/>
<reference key="1">
    <citation type="journal article" date="2005" name="Nature">
        <title>The genome of the social amoeba Dictyostelium discoideum.</title>
        <authorList>
            <person name="Eichinger L."/>
            <person name="Pachebat J.A."/>
            <person name="Gloeckner G."/>
            <person name="Rajandream M.A."/>
            <person name="Sucgang R."/>
            <person name="Berriman M."/>
            <person name="Song J."/>
            <person name="Olsen R."/>
            <person name="Szafranski K."/>
            <person name="Xu Q."/>
            <person name="Tunggal B."/>
            <person name="Kummerfeld S."/>
            <person name="Madera M."/>
            <person name="Konfortov B.A."/>
            <person name="Rivero F."/>
            <person name="Bankier A.T."/>
            <person name="Lehmann R."/>
            <person name="Hamlin N."/>
            <person name="Davies R."/>
            <person name="Gaudet P."/>
            <person name="Fey P."/>
            <person name="Pilcher K."/>
            <person name="Chen G."/>
            <person name="Saunders D."/>
            <person name="Sodergren E.J."/>
            <person name="Davis P."/>
            <person name="Kerhornou A."/>
            <person name="Nie X."/>
            <person name="Hall N."/>
            <person name="Anjard C."/>
            <person name="Hemphill L."/>
            <person name="Bason N."/>
            <person name="Farbrother P."/>
            <person name="Desany B."/>
            <person name="Just E."/>
            <person name="Morio T."/>
            <person name="Rost R."/>
            <person name="Churcher C.M."/>
            <person name="Cooper J."/>
            <person name="Haydock S."/>
            <person name="van Driessche N."/>
            <person name="Cronin A."/>
            <person name="Goodhead I."/>
            <person name="Muzny D.M."/>
            <person name="Mourier T."/>
            <person name="Pain A."/>
            <person name="Lu M."/>
            <person name="Harper D."/>
            <person name="Lindsay R."/>
            <person name="Hauser H."/>
            <person name="James K.D."/>
            <person name="Quiles M."/>
            <person name="Madan Babu M."/>
            <person name="Saito T."/>
            <person name="Buchrieser C."/>
            <person name="Wardroper A."/>
            <person name="Felder M."/>
            <person name="Thangavelu M."/>
            <person name="Johnson D."/>
            <person name="Knights A."/>
            <person name="Loulseged H."/>
            <person name="Mungall K.L."/>
            <person name="Oliver K."/>
            <person name="Price C."/>
            <person name="Quail M.A."/>
            <person name="Urushihara H."/>
            <person name="Hernandez J."/>
            <person name="Rabbinowitsch E."/>
            <person name="Steffen D."/>
            <person name="Sanders M."/>
            <person name="Ma J."/>
            <person name="Kohara Y."/>
            <person name="Sharp S."/>
            <person name="Simmonds M.N."/>
            <person name="Spiegler S."/>
            <person name="Tivey A."/>
            <person name="Sugano S."/>
            <person name="White B."/>
            <person name="Walker D."/>
            <person name="Woodward J.R."/>
            <person name="Winckler T."/>
            <person name="Tanaka Y."/>
            <person name="Shaulsky G."/>
            <person name="Schleicher M."/>
            <person name="Weinstock G.M."/>
            <person name="Rosenthal A."/>
            <person name="Cox E.C."/>
            <person name="Chisholm R.L."/>
            <person name="Gibbs R.A."/>
            <person name="Loomis W.F."/>
            <person name="Platzer M."/>
            <person name="Kay R.R."/>
            <person name="Williams J.G."/>
            <person name="Dear P.H."/>
            <person name="Noegel A.A."/>
            <person name="Barrell B.G."/>
            <person name="Kuspa A."/>
        </authorList>
    </citation>
    <scope>NUCLEOTIDE SEQUENCE [LARGE SCALE GENOMIC DNA]</scope>
    <source>
        <strain>AX4</strain>
    </source>
</reference>
<protein>
    <recommendedName>
        <fullName>Fido domain-containing protein DDB_G0283145</fullName>
    </recommendedName>
</protein>
<proteinExistence type="predicted"/>
<keyword id="KW-0472">Membrane</keyword>
<keyword id="KW-1185">Reference proteome</keyword>
<keyword id="KW-0812">Transmembrane</keyword>
<keyword id="KW-1133">Transmembrane helix</keyword>
<sequence>MKGIIVSDGVYREEDVFAGQRIFMTPELIEKTMLGLVQKYNQYRPTTKSSPYAVAAWLLHAFVSIHPFIDGNGRMGRILANLVLFSYGFPFPVPISADNDEYIKSLRLADRYYEKGRDTSHLALIILNSSHSIYKNYLSNLEL</sequence>
<organism>
    <name type="scientific">Dictyostelium discoideum</name>
    <name type="common">Social amoeba</name>
    <dbReference type="NCBI Taxonomy" id="44689"/>
    <lineage>
        <taxon>Eukaryota</taxon>
        <taxon>Amoebozoa</taxon>
        <taxon>Evosea</taxon>
        <taxon>Eumycetozoa</taxon>
        <taxon>Dictyostelia</taxon>
        <taxon>Dictyosteliales</taxon>
        <taxon>Dictyosteliaceae</taxon>
        <taxon>Dictyostelium</taxon>
    </lineage>
</organism>
<accession>Q54RJ6</accession>
<accession>Q54RJ7</accession>
<comment type="subcellular location">
    <subcellularLocation>
        <location evidence="3">Membrane</location>
        <topology evidence="3">Single-pass membrane protein</topology>
    </subcellularLocation>
</comment>
<comment type="sequence caution" evidence="3">
    <conflict type="erroneous gene model prediction">
        <sequence resource="EMBL-CDS" id="EAL65882"/>
    </conflict>
</comment>
<name>Y5363_DICDI</name>